<protein>
    <recommendedName>
        <fullName>Varv peptide H</fullName>
    </recommendedName>
</protein>
<organism>
    <name type="scientific">Viola arvensis</name>
    <name type="common">European field pansy</name>
    <name type="synonym">Field violet</name>
    <dbReference type="NCBI Taxonomy" id="97415"/>
    <lineage>
        <taxon>Eukaryota</taxon>
        <taxon>Viridiplantae</taxon>
        <taxon>Streptophyta</taxon>
        <taxon>Embryophyta</taxon>
        <taxon>Tracheophyta</taxon>
        <taxon>Spermatophyta</taxon>
        <taxon>Magnoliopsida</taxon>
        <taxon>eudicotyledons</taxon>
        <taxon>Gunneridae</taxon>
        <taxon>Pentapetalae</taxon>
        <taxon>rosids</taxon>
        <taxon>fabids</taxon>
        <taxon>Malpighiales</taxon>
        <taxon>Violaceae</taxon>
        <taxon>Viola</taxon>
        <taxon>Viola subgen. Viola</taxon>
        <taxon>Viola sect. Melanium</taxon>
        <taxon>Viola subsect. Bracteolatae</taxon>
    </lineage>
</organism>
<dbReference type="SMR" id="P58453"/>
<dbReference type="GO" id="GO:0006952">
    <property type="term" value="P:defense response"/>
    <property type="evidence" value="ECO:0000250"/>
    <property type="project" value="UniProtKB"/>
</dbReference>
<dbReference type="InterPro" id="IPR005535">
    <property type="entry name" value="Cyclotide"/>
</dbReference>
<dbReference type="InterPro" id="IPR012324">
    <property type="entry name" value="Cyclotide_moebius_CS"/>
</dbReference>
<dbReference type="InterPro" id="IPR036146">
    <property type="entry name" value="Cyclotide_sf"/>
</dbReference>
<dbReference type="Pfam" id="PF03784">
    <property type="entry name" value="Cyclotide"/>
    <property type="match status" value="1"/>
</dbReference>
<dbReference type="PIRSF" id="PIRSF037891">
    <property type="entry name" value="Cycloviolacin"/>
    <property type="match status" value="1"/>
</dbReference>
<dbReference type="SUPFAM" id="SSF57038">
    <property type="entry name" value="Cyclotides"/>
    <property type="match status" value="1"/>
</dbReference>
<dbReference type="PROSITE" id="PS51052">
    <property type="entry name" value="CYCLOTIDE"/>
    <property type="match status" value="1"/>
</dbReference>
<dbReference type="PROSITE" id="PS60009">
    <property type="entry name" value="CYCLOTIDE_MOEBIUS"/>
    <property type="match status" value="1"/>
</dbReference>
<name>VARH_VIOAR</name>
<accession>P58453</accession>
<comment type="function">
    <text>Probably participates in a plant defense mechanism.</text>
</comment>
<comment type="domain">
    <text>The presence of a 'disulfide through disulfide knot' structurally defines this protein as a knottin.</text>
</comment>
<comment type="PTM">
    <text>This is a cyclic peptide.</text>
</comment>
<comment type="mass spectrometry"/>
<comment type="similarity">
    <text evidence="1">Belongs to the cyclotide family. Moebius subfamily.</text>
</comment>
<comment type="caution">
    <text evidence="3">This peptide is cyclic. The start position was chosen by similarity to OAK1 (kalata-B1) for which the DNA sequence is known.</text>
</comment>
<proteinExistence type="evidence at protein level"/>
<sequence>GLPVCGETCFGGTCNTPGCSCETWPVCSRN</sequence>
<reference key="1">
    <citation type="journal article" date="1999" name="J. Nat. Prod.">
        <title>Seven novel macrocyclic polypeptides from Viola arvensis.</title>
        <authorList>
            <person name="Goeransson U."/>
            <person name="Luijendijk T."/>
            <person name="Johansson S."/>
            <person name="Bohlin L."/>
            <person name="Claeson P."/>
        </authorList>
    </citation>
    <scope>PROTEIN SEQUENCE</scope>
    <scope>MASS SPECTROMETRY</scope>
</reference>
<feature type="peptide" id="PRO_0000043628" description="Varv peptide H">
    <location>
        <begin position="1"/>
        <end position="30"/>
    </location>
</feature>
<feature type="disulfide bond">
    <location>
        <begin position="5"/>
        <end position="19"/>
    </location>
</feature>
<feature type="disulfide bond">
    <location>
        <begin position="9"/>
        <end position="21"/>
    </location>
</feature>
<feature type="disulfide bond">
    <location>
        <begin position="14"/>
        <end position="27"/>
    </location>
</feature>
<feature type="cross-link" description="Cyclopeptide (Gly-Asn)">
    <location>
        <begin position="1"/>
        <end position="30"/>
    </location>
</feature>
<keyword id="KW-0903">Direct protein sequencing</keyword>
<keyword id="KW-1015">Disulfide bond</keyword>
<keyword id="KW-0960">Knottin</keyword>
<keyword id="KW-0611">Plant defense</keyword>
<evidence type="ECO:0000255" key="1">
    <source>
        <dbReference type="PROSITE-ProRule" id="PRU00395"/>
    </source>
</evidence>
<evidence type="ECO:0000269" key="2">
    <source>
    </source>
</evidence>
<evidence type="ECO:0000305" key="3"/>